<comment type="function">
    <text evidence="1">Catalyzes the addition of molecular CO(2) and H(2)O to ribulose 1,5-bisphosphate (RuBP), generating two molecules of 3-phosphoglycerate (3-PGA). Functions in an archaeal AMP degradation pathway, together with AMP phosphorylase and R15P isomerase.</text>
</comment>
<comment type="catalytic activity">
    <reaction evidence="1">
        <text>2 (2R)-3-phosphoglycerate + 2 H(+) = D-ribulose 1,5-bisphosphate + CO2 + H2O</text>
        <dbReference type="Rhea" id="RHEA:23124"/>
        <dbReference type="ChEBI" id="CHEBI:15377"/>
        <dbReference type="ChEBI" id="CHEBI:15378"/>
        <dbReference type="ChEBI" id="CHEBI:16526"/>
        <dbReference type="ChEBI" id="CHEBI:57870"/>
        <dbReference type="ChEBI" id="CHEBI:58272"/>
        <dbReference type="EC" id="4.1.1.39"/>
    </reaction>
</comment>
<comment type="catalytic activity">
    <reaction evidence="1">
        <text>D-ribulose 1,5-bisphosphate + O2 = 2-phosphoglycolate + (2R)-3-phosphoglycerate + 2 H(+)</text>
        <dbReference type="Rhea" id="RHEA:36631"/>
        <dbReference type="ChEBI" id="CHEBI:15378"/>
        <dbReference type="ChEBI" id="CHEBI:15379"/>
        <dbReference type="ChEBI" id="CHEBI:57870"/>
        <dbReference type="ChEBI" id="CHEBI:58033"/>
        <dbReference type="ChEBI" id="CHEBI:58272"/>
    </reaction>
</comment>
<comment type="cofactor">
    <cofactor evidence="1">
        <name>Mg(2+)</name>
        <dbReference type="ChEBI" id="CHEBI:18420"/>
    </cofactor>
    <text evidence="1">Binds 1 Mg(2+) ion per subunit.</text>
</comment>
<comment type="subunit">
    <text evidence="1">Homodimer or homodecamer. In contrast to form I RuBisCO, the form III RuBisCO is composed solely of large subunits.</text>
</comment>
<comment type="miscellaneous">
    <text evidence="1">Because the Archaea possessing a type III RuBisCO are all anaerobic, it is most likely that only the carboxylase activity of RuBisCO, and not the competitive oxygenase activity (by which RuBP reacts with O(2) to form one molecule of 3-phosphoglycerate and one molecule of 2-phosphoglycolate), is biologically relevant in these strains.</text>
</comment>
<comment type="similarity">
    <text evidence="1">Belongs to the RuBisCO large chain family. Type III subfamily.</text>
</comment>
<gene>
    <name evidence="1" type="primary">rbcL</name>
    <name type="ordered locus">PYRAB12110</name>
    <name type="ORF">PAB1580</name>
</gene>
<evidence type="ECO:0000255" key="1">
    <source>
        <dbReference type="HAMAP-Rule" id="MF_01133"/>
    </source>
</evidence>
<organism>
    <name type="scientific">Pyrococcus abyssi (strain GE5 / Orsay)</name>
    <dbReference type="NCBI Taxonomy" id="272844"/>
    <lineage>
        <taxon>Archaea</taxon>
        <taxon>Methanobacteriati</taxon>
        <taxon>Methanobacteriota</taxon>
        <taxon>Thermococci</taxon>
        <taxon>Thermococcales</taxon>
        <taxon>Thermococcaceae</taxon>
        <taxon>Pyrococcus</taxon>
    </lineage>
</organism>
<feature type="chain" id="PRO_0000062675" description="Ribulose bisphosphate carboxylase">
    <location>
        <begin position="1"/>
        <end position="424"/>
    </location>
</feature>
<feature type="active site" description="Proton acceptor" evidence="1">
    <location>
        <position position="159"/>
    </location>
</feature>
<feature type="active site" description="Proton acceptor" evidence="1">
    <location>
        <position position="277"/>
    </location>
</feature>
<feature type="binding site" evidence="1">
    <location>
        <position position="161"/>
    </location>
    <ligand>
        <name>substrate</name>
    </ligand>
</feature>
<feature type="binding site" description="via carbamate group" evidence="1">
    <location>
        <position position="185"/>
    </location>
    <ligand>
        <name>Mg(2+)</name>
        <dbReference type="ChEBI" id="CHEBI:18420"/>
    </ligand>
</feature>
<feature type="binding site" evidence="1">
    <location>
        <position position="187"/>
    </location>
    <ligand>
        <name>Mg(2+)</name>
        <dbReference type="ChEBI" id="CHEBI:18420"/>
    </ligand>
</feature>
<feature type="binding site" evidence="1">
    <location>
        <position position="188"/>
    </location>
    <ligand>
        <name>Mg(2+)</name>
        <dbReference type="ChEBI" id="CHEBI:18420"/>
    </ligand>
</feature>
<feature type="binding site" evidence="1">
    <location>
        <position position="278"/>
    </location>
    <ligand>
        <name>substrate</name>
    </ligand>
</feature>
<feature type="binding site" evidence="1">
    <location>
        <position position="310"/>
    </location>
    <ligand>
        <name>substrate</name>
    </ligand>
</feature>
<feature type="binding site" evidence="1">
    <location>
        <begin position="347"/>
        <end position="349"/>
    </location>
    <ligand>
        <name>substrate</name>
    </ligand>
</feature>
<feature type="binding site" evidence="1">
    <location>
        <begin position="369"/>
        <end position="372"/>
    </location>
    <ligand>
        <name>substrate</name>
    </ligand>
</feature>
<feature type="site" description="Transition state stabilizer" evidence="1">
    <location>
        <position position="317"/>
    </location>
</feature>
<feature type="modified residue" description="N6-carboxylysine" evidence="1">
    <location>
        <position position="185"/>
    </location>
</feature>
<protein>
    <recommendedName>
        <fullName evidence="1">Ribulose bisphosphate carboxylase</fullName>
        <shortName evidence="1">RuBisCO</shortName>
        <ecNumber evidence="1">4.1.1.39</ecNumber>
    </recommendedName>
</protein>
<sequence length="424" mass="47606">MVSSMKVEWYLDFVDLNYEPGRDELIVEYYFEPNGVSPEEAAGRIASESSIGTWTTLWKLPEMAKRSMAKVFYLEKHGEGYIAKIAYPLTLFEEGSLVQLFSAIAGNVFGMKALKNLRLLDFHPPYEYLRHFKGPQFGVKGIREFMGIKDRPLTATVPKPKMGWSVEEYAEIAYELWSGGIDLLKDDENFTSFPFNRFEERVKKLYRVRDRVEAETGETKEYLINITGPVNVMEKRAELVANEGGQYVMIDIVVAGWSALQYMREVTEDLGLAIHAHRAMHAAFTRNPKHGITMFALAKAARMIGVDQIHTGTAVGKMAGDYEEIKKINDFLLSKWEHIRPVFPVASGGLHPGLMPELIRLFGKDLVIQAGGGVMGHPDGPRAGAKALRDAIDAAIEGLDLEEKAKSSPELKKALDKWGYLKPK</sequence>
<proteinExistence type="inferred from homology"/>
<reference key="1">
    <citation type="journal article" date="2003" name="Mol. Microbiol.">
        <title>An integrated analysis of the genome of the hyperthermophilic archaeon Pyrococcus abyssi.</title>
        <authorList>
            <person name="Cohen G.N."/>
            <person name="Barbe V."/>
            <person name="Flament D."/>
            <person name="Galperin M."/>
            <person name="Heilig R."/>
            <person name="Lecompte O."/>
            <person name="Poch O."/>
            <person name="Prieur D."/>
            <person name="Querellou J."/>
            <person name="Ripp R."/>
            <person name="Thierry J.-C."/>
            <person name="Van der Oost J."/>
            <person name="Weissenbach J."/>
            <person name="Zivanovic Y."/>
            <person name="Forterre P."/>
        </authorList>
    </citation>
    <scope>NUCLEOTIDE SEQUENCE [LARGE SCALE GENOMIC DNA]</scope>
    <source>
        <strain>GE5 / Orsay</strain>
    </source>
</reference>
<reference key="2">
    <citation type="journal article" date="2012" name="Curr. Microbiol.">
        <title>Re-annotation of two hyperthermophilic archaea Pyrococcus abyssi GE5 and Pyrococcus furiosus DSM 3638.</title>
        <authorList>
            <person name="Gao J."/>
            <person name="Wang J."/>
        </authorList>
    </citation>
    <scope>GENOME REANNOTATION</scope>
    <source>
        <strain>GE5 / Orsay</strain>
    </source>
</reference>
<dbReference type="EC" id="4.1.1.39" evidence="1"/>
<dbReference type="EMBL" id="AJ248286">
    <property type="protein sequence ID" value="CAB50122.1"/>
    <property type="molecule type" value="Genomic_DNA"/>
</dbReference>
<dbReference type="EMBL" id="HE613800">
    <property type="protein sequence ID" value="CCE70647.1"/>
    <property type="molecule type" value="Genomic_DNA"/>
</dbReference>
<dbReference type="PIR" id="E75102">
    <property type="entry name" value="E75102"/>
</dbReference>
<dbReference type="SMR" id="Q9UZD7"/>
<dbReference type="STRING" id="272844.PAB1580"/>
<dbReference type="KEGG" id="pab:PAB1580"/>
<dbReference type="PATRIC" id="fig|272844.11.peg.1291"/>
<dbReference type="eggNOG" id="arCOG04443">
    <property type="taxonomic scope" value="Archaea"/>
</dbReference>
<dbReference type="HOGENOM" id="CLU_031450_3_1_2"/>
<dbReference type="PhylomeDB" id="Q9UZD7"/>
<dbReference type="Proteomes" id="UP000000810">
    <property type="component" value="Chromosome"/>
</dbReference>
<dbReference type="Proteomes" id="UP000009139">
    <property type="component" value="Chromosome"/>
</dbReference>
<dbReference type="GO" id="GO:0000287">
    <property type="term" value="F:magnesium ion binding"/>
    <property type="evidence" value="ECO:0007669"/>
    <property type="project" value="UniProtKB-UniRule"/>
</dbReference>
<dbReference type="GO" id="GO:0016491">
    <property type="term" value="F:oxidoreductase activity"/>
    <property type="evidence" value="ECO:0007669"/>
    <property type="project" value="UniProtKB-KW"/>
</dbReference>
<dbReference type="GO" id="GO:0016984">
    <property type="term" value="F:ribulose-bisphosphate carboxylase activity"/>
    <property type="evidence" value="ECO:0007669"/>
    <property type="project" value="UniProtKB-UniRule"/>
</dbReference>
<dbReference type="GO" id="GO:0006196">
    <property type="term" value="P:AMP catabolic process"/>
    <property type="evidence" value="ECO:0007669"/>
    <property type="project" value="UniProtKB-UniRule"/>
</dbReference>
<dbReference type="GO" id="GO:0015977">
    <property type="term" value="P:carbon fixation"/>
    <property type="evidence" value="ECO:0007669"/>
    <property type="project" value="UniProtKB-KW"/>
</dbReference>
<dbReference type="CDD" id="cd08213">
    <property type="entry name" value="RuBisCO_large_III"/>
    <property type="match status" value="1"/>
</dbReference>
<dbReference type="Gene3D" id="3.20.20.110">
    <property type="entry name" value="Ribulose bisphosphate carboxylase, large subunit, C-terminal domain"/>
    <property type="match status" value="1"/>
</dbReference>
<dbReference type="Gene3D" id="3.30.70.150">
    <property type="entry name" value="RuBisCO large subunit, N-terminal domain"/>
    <property type="match status" value="1"/>
</dbReference>
<dbReference type="HAMAP" id="MF_01133">
    <property type="entry name" value="RuBisCO_L_type3"/>
    <property type="match status" value="1"/>
</dbReference>
<dbReference type="InterPro" id="IPR033966">
    <property type="entry name" value="RuBisCO"/>
</dbReference>
<dbReference type="InterPro" id="IPR017712">
    <property type="entry name" value="RuBisCO_III"/>
</dbReference>
<dbReference type="InterPro" id="IPR000685">
    <property type="entry name" value="RuBisCO_lsu_C"/>
</dbReference>
<dbReference type="InterPro" id="IPR036376">
    <property type="entry name" value="RuBisCO_lsu_C_sf"/>
</dbReference>
<dbReference type="InterPro" id="IPR017443">
    <property type="entry name" value="RuBisCO_lsu_fd_N"/>
</dbReference>
<dbReference type="InterPro" id="IPR036422">
    <property type="entry name" value="RuBisCO_lsu_N_sf"/>
</dbReference>
<dbReference type="NCBIfam" id="NF003252">
    <property type="entry name" value="PRK04208.1"/>
    <property type="match status" value="1"/>
</dbReference>
<dbReference type="NCBIfam" id="TIGR03326">
    <property type="entry name" value="rubisco_III"/>
    <property type="match status" value="1"/>
</dbReference>
<dbReference type="PANTHER" id="PTHR42704">
    <property type="entry name" value="RIBULOSE BISPHOSPHATE CARBOXYLASE"/>
    <property type="match status" value="1"/>
</dbReference>
<dbReference type="PANTHER" id="PTHR42704:SF17">
    <property type="entry name" value="RIBULOSE BISPHOSPHATE CARBOXYLASE LARGE CHAIN"/>
    <property type="match status" value="1"/>
</dbReference>
<dbReference type="Pfam" id="PF00016">
    <property type="entry name" value="RuBisCO_large"/>
    <property type="match status" value="1"/>
</dbReference>
<dbReference type="Pfam" id="PF02788">
    <property type="entry name" value="RuBisCO_large_N"/>
    <property type="match status" value="1"/>
</dbReference>
<dbReference type="SFLD" id="SFLDG01052">
    <property type="entry name" value="RuBisCO"/>
    <property type="match status" value="1"/>
</dbReference>
<dbReference type="SFLD" id="SFLDS00014">
    <property type="entry name" value="RuBisCO"/>
    <property type="match status" value="2"/>
</dbReference>
<dbReference type="SFLD" id="SFLDG00301">
    <property type="entry name" value="RuBisCO-like_proteins"/>
    <property type="match status" value="1"/>
</dbReference>
<dbReference type="SUPFAM" id="SSF51649">
    <property type="entry name" value="RuBisCo, C-terminal domain"/>
    <property type="match status" value="1"/>
</dbReference>
<dbReference type="SUPFAM" id="SSF54966">
    <property type="entry name" value="RuBisCO, large subunit, small (N-terminal) domain"/>
    <property type="match status" value="1"/>
</dbReference>
<accession>Q9UZD7</accession>
<accession>G8ZKK4</accession>
<name>RBL_PYRAB</name>
<keyword id="KW-0120">Carbon dioxide fixation</keyword>
<keyword id="KW-0456">Lyase</keyword>
<keyword id="KW-0460">Magnesium</keyword>
<keyword id="KW-0479">Metal-binding</keyword>
<keyword id="KW-0560">Oxidoreductase</keyword>